<organism>
    <name type="scientific">Pseudomonas putida (strain GB-1)</name>
    <dbReference type="NCBI Taxonomy" id="76869"/>
    <lineage>
        <taxon>Bacteria</taxon>
        <taxon>Pseudomonadati</taxon>
        <taxon>Pseudomonadota</taxon>
        <taxon>Gammaproteobacteria</taxon>
        <taxon>Pseudomonadales</taxon>
        <taxon>Pseudomonadaceae</taxon>
        <taxon>Pseudomonas</taxon>
    </lineage>
</organism>
<name>ASTB_PSEPG</name>
<dbReference type="EC" id="3.5.3.23" evidence="1"/>
<dbReference type="EMBL" id="CP000926">
    <property type="protein sequence ID" value="ABY99872.1"/>
    <property type="molecule type" value="Genomic_DNA"/>
</dbReference>
<dbReference type="RefSeq" id="WP_012273560.1">
    <property type="nucleotide sequence ID" value="NC_010322.1"/>
</dbReference>
<dbReference type="SMR" id="B0KR46"/>
<dbReference type="KEGG" id="ppg:PputGB1_3982"/>
<dbReference type="eggNOG" id="COG3724">
    <property type="taxonomic scope" value="Bacteria"/>
</dbReference>
<dbReference type="HOGENOM" id="CLU_053835_0_0_6"/>
<dbReference type="UniPathway" id="UPA00185">
    <property type="reaction ID" value="UER00280"/>
</dbReference>
<dbReference type="Proteomes" id="UP000002157">
    <property type="component" value="Chromosome"/>
</dbReference>
<dbReference type="GO" id="GO:0009015">
    <property type="term" value="F:N-succinylarginine dihydrolase activity"/>
    <property type="evidence" value="ECO:0007669"/>
    <property type="project" value="UniProtKB-UniRule"/>
</dbReference>
<dbReference type="GO" id="GO:0019544">
    <property type="term" value="P:arginine catabolic process to glutamate"/>
    <property type="evidence" value="ECO:0007669"/>
    <property type="project" value="UniProtKB-UniRule"/>
</dbReference>
<dbReference type="GO" id="GO:0019545">
    <property type="term" value="P:arginine catabolic process to succinate"/>
    <property type="evidence" value="ECO:0007669"/>
    <property type="project" value="UniProtKB-UniRule"/>
</dbReference>
<dbReference type="FunFam" id="3.75.10.20:FF:000001">
    <property type="entry name" value="N-succinylarginine dihydrolase"/>
    <property type="match status" value="1"/>
</dbReference>
<dbReference type="Gene3D" id="3.75.10.20">
    <property type="entry name" value="Succinylarginine dihydrolase"/>
    <property type="match status" value="1"/>
</dbReference>
<dbReference type="HAMAP" id="MF_01172">
    <property type="entry name" value="AstB"/>
    <property type="match status" value="1"/>
</dbReference>
<dbReference type="InterPro" id="IPR037031">
    <property type="entry name" value="AstB_sf"/>
</dbReference>
<dbReference type="InterPro" id="IPR007079">
    <property type="entry name" value="SuccinylArg_d-Hdrlase_AstB"/>
</dbReference>
<dbReference type="NCBIfam" id="TIGR03241">
    <property type="entry name" value="arg_catab_astB"/>
    <property type="match status" value="1"/>
</dbReference>
<dbReference type="NCBIfam" id="NF009789">
    <property type="entry name" value="PRK13281.1"/>
    <property type="match status" value="1"/>
</dbReference>
<dbReference type="PANTHER" id="PTHR30420">
    <property type="entry name" value="N-SUCCINYLARGININE DIHYDROLASE"/>
    <property type="match status" value="1"/>
</dbReference>
<dbReference type="PANTHER" id="PTHR30420:SF2">
    <property type="entry name" value="N-SUCCINYLARGININE DIHYDROLASE"/>
    <property type="match status" value="1"/>
</dbReference>
<dbReference type="Pfam" id="PF04996">
    <property type="entry name" value="AstB"/>
    <property type="match status" value="1"/>
</dbReference>
<dbReference type="SUPFAM" id="SSF55909">
    <property type="entry name" value="Pentein"/>
    <property type="match status" value="1"/>
</dbReference>
<reference key="1">
    <citation type="submission" date="2008-01" db="EMBL/GenBank/DDBJ databases">
        <title>Complete sequence of Pseudomonas putida GB-1.</title>
        <authorList>
            <consortium name="US DOE Joint Genome Institute"/>
            <person name="Copeland A."/>
            <person name="Lucas S."/>
            <person name="Lapidus A."/>
            <person name="Barry K."/>
            <person name="Glavina del Rio T."/>
            <person name="Dalin E."/>
            <person name="Tice H."/>
            <person name="Pitluck S."/>
            <person name="Bruce D."/>
            <person name="Goodwin L."/>
            <person name="Chertkov O."/>
            <person name="Brettin T."/>
            <person name="Detter J.C."/>
            <person name="Han C."/>
            <person name="Kuske C.R."/>
            <person name="Schmutz J."/>
            <person name="Larimer F."/>
            <person name="Land M."/>
            <person name="Hauser L."/>
            <person name="Kyrpides N."/>
            <person name="Kim E."/>
            <person name="McCarthy J.K."/>
            <person name="Richardson P."/>
        </authorList>
    </citation>
    <scope>NUCLEOTIDE SEQUENCE [LARGE SCALE GENOMIC DNA]</scope>
    <source>
        <strain>GB-1</strain>
    </source>
</reference>
<evidence type="ECO:0000255" key="1">
    <source>
        <dbReference type="HAMAP-Rule" id="MF_01172"/>
    </source>
</evidence>
<evidence type="ECO:0000256" key="2">
    <source>
        <dbReference type="SAM" id="MobiDB-lite"/>
    </source>
</evidence>
<sequence length="449" mass="48711">MKSYEVNFDGLVGPTHNYGGLSYGNVASQSNSQQGSNPREAARQGLAKMKALADMGFKQGVLAPQERPDVAALRRLGFSGSDAEVIQRAAADAMPLLVASCSASSMWVANAATVSPSADTADGRVHFTAANLNCKYHRSIEHPTTSRVLGAMFNNEKHFAHHPALPAVAQFGDEGAANHTRFCSAYGEAGVEFFVYGRSAFDSRYPAPQKYPARQTLEASQAVARLHGLSDDGVVYAQQNPAVIDQGVFHNDVISVGNGEVLFYHEDAFLETDAVLGQLRAKLASKGGNFQAICVPRAAVTVEDAVRSYLFNSQLLSRDDGSMLLVVPEECRNNERVWAYLGQLTSQGGPVNEVKIFDLKQSMQNGGGPACLRLRVALKETELAAVNQGVIMTASLYDTLLQWVDRHYRDRLGEADLADPQLLVECRTALDELTQILKLGSVYPFQRQP</sequence>
<gene>
    <name evidence="1" type="primary">astB</name>
    <name type="ordered locus">PputGB1_3982</name>
</gene>
<proteinExistence type="inferred from homology"/>
<accession>B0KR46</accession>
<keyword id="KW-0056">Arginine metabolism</keyword>
<keyword id="KW-0378">Hydrolase</keyword>
<protein>
    <recommendedName>
        <fullName evidence="1">N-succinylarginine dihydrolase</fullName>
        <ecNumber evidence="1">3.5.3.23</ecNumber>
    </recommendedName>
</protein>
<feature type="chain" id="PRO_1000085394" description="N-succinylarginine dihydrolase">
    <location>
        <begin position="1"/>
        <end position="449"/>
    </location>
</feature>
<feature type="region of interest" description="Disordered" evidence="2">
    <location>
        <begin position="23"/>
        <end position="43"/>
    </location>
</feature>
<feature type="compositionally biased region" description="Polar residues" evidence="2">
    <location>
        <begin position="25"/>
        <end position="37"/>
    </location>
</feature>
<feature type="active site" evidence="1">
    <location>
        <position position="174"/>
    </location>
</feature>
<feature type="active site" evidence="1">
    <location>
        <position position="250"/>
    </location>
</feature>
<feature type="active site" description="Nucleophile" evidence="1">
    <location>
        <position position="371"/>
    </location>
</feature>
<feature type="binding site" evidence="1">
    <location>
        <begin position="19"/>
        <end position="28"/>
    </location>
    <ligand>
        <name>substrate</name>
    </ligand>
</feature>
<feature type="binding site" evidence="1">
    <location>
        <position position="110"/>
    </location>
    <ligand>
        <name>substrate</name>
    </ligand>
</feature>
<feature type="binding site" evidence="1">
    <location>
        <begin position="137"/>
        <end position="138"/>
    </location>
    <ligand>
        <name>substrate</name>
    </ligand>
</feature>
<feature type="binding site" evidence="1">
    <location>
        <position position="214"/>
    </location>
    <ligand>
        <name>substrate</name>
    </ligand>
</feature>
<feature type="binding site" evidence="1">
    <location>
        <position position="252"/>
    </location>
    <ligand>
        <name>substrate</name>
    </ligand>
</feature>
<feature type="binding site" evidence="1">
    <location>
        <position position="365"/>
    </location>
    <ligand>
        <name>substrate</name>
    </ligand>
</feature>
<comment type="function">
    <text evidence="1">Catalyzes the hydrolysis of N(2)-succinylarginine into N(2)-succinylornithine, ammonia and CO(2).</text>
</comment>
<comment type="catalytic activity">
    <reaction evidence="1">
        <text>N(2)-succinyl-L-arginine + 2 H2O + 2 H(+) = N(2)-succinyl-L-ornithine + 2 NH4(+) + CO2</text>
        <dbReference type="Rhea" id="RHEA:19533"/>
        <dbReference type="ChEBI" id="CHEBI:15377"/>
        <dbReference type="ChEBI" id="CHEBI:15378"/>
        <dbReference type="ChEBI" id="CHEBI:16526"/>
        <dbReference type="ChEBI" id="CHEBI:28938"/>
        <dbReference type="ChEBI" id="CHEBI:58241"/>
        <dbReference type="ChEBI" id="CHEBI:58514"/>
        <dbReference type="EC" id="3.5.3.23"/>
    </reaction>
</comment>
<comment type="pathway">
    <text evidence="1">Amino-acid degradation; L-arginine degradation via AST pathway; L-glutamate and succinate from L-arginine: step 2/5.</text>
</comment>
<comment type="subunit">
    <text evidence="1">Homodimer.</text>
</comment>
<comment type="similarity">
    <text evidence="1">Belongs to the succinylarginine dihydrolase family.</text>
</comment>